<proteinExistence type="inferred from homology"/>
<comment type="function">
    <text evidence="1">Allows the formation of correctly charged Gln-tRNA(Gln) through the transamidation of misacylated Glu-tRNA(Gln) in the mitochondria. The reaction takes place in the presence of glutamine and ATP through an activated gamma-phospho-Glu-tRNA(Gln).</text>
</comment>
<comment type="catalytic activity">
    <reaction evidence="1">
        <text>L-glutamyl-tRNA(Gln) + L-glutamine + ATP + H2O = L-glutaminyl-tRNA(Gln) + L-glutamate + ADP + phosphate + H(+)</text>
        <dbReference type="Rhea" id="RHEA:17521"/>
        <dbReference type="Rhea" id="RHEA-COMP:9681"/>
        <dbReference type="Rhea" id="RHEA-COMP:9684"/>
        <dbReference type="ChEBI" id="CHEBI:15377"/>
        <dbReference type="ChEBI" id="CHEBI:15378"/>
        <dbReference type="ChEBI" id="CHEBI:29985"/>
        <dbReference type="ChEBI" id="CHEBI:30616"/>
        <dbReference type="ChEBI" id="CHEBI:43474"/>
        <dbReference type="ChEBI" id="CHEBI:58359"/>
        <dbReference type="ChEBI" id="CHEBI:78520"/>
        <dbReference type="ChEBI" id="CHEBI:78521"/>
        <dbReference type="ChEBI" id="CHEBI:456216"/>
    </reaction>
</comment>
<comment type="subunit">
    <text evidence="1">Subunit of the heterotrimeric GatCAB amidotransferase (AdT) complex, composed of A, B and C subunits.</text>
</comment>
<comment type="subcellular location">
    <subcellularLocation>
        <location evidence="1">Mitochondrion</location>
    </subcellularLocation>
</comment>
<comment type="similarity">
    <text evidence="1">Belongs to the GatB/GatE family. GatB subfamily.</text>
</comment>
<accession>B8M501</accession>
<sequence>MPRLWYSRYLASARLRCRPLLISEQYGARIYQHLLRRTINTEANVQRPNDIVPLRKQLKEEAKRSKSQSRNGRGKKQVAANNEWELTVGIEIHAQLNSEAKLFSRAPTSTVAEPNSNVALFDLAFPGSQPEFQAATLLPALRAAIALNCEVQHTSRFDRKHYFYQDQPAGYQITQYYEPFARNGFIKLYDYDGIAPEDGKFVRIDIKQMQLEQDTAKSHEHPPSAHFLDFNRVSHPLIEIITMPQIHSPATAAACVRKIQAILQATSAVTTGMELGGLRADVNVSVRRRDAPPGAGEYYGVRGLGQRTEIKNLSSFKAVEDAIIAERDRQIRVLESGGTVEVETRGWSIGSTETRKLRSKEGEVDYRYMPDPDLHPLFIDDGLVSTLKENLPTLPDQLLAMLVGPMYGLSLEDAKPLVELDDGARLEYYQDVFDVLQALHSDDRDAAKKGLGRTAANWVLHELGALHTKAEVAWHADRIPAQTLAELIDQLIRKKITSSVAKQVLVMVFEGDQRPIQQLLEEENLLLRPLCREEYIALANSLIEENPQMVAQIREKNQLGKIGWFVGQMVRQGEKGRVEAQRAEEILRELILKRN</sequence>
<reference key="1">
    <citation type="journal article" date="2015" name="Genome Announc.">
        <title>Genome sequence of the AIDS-associated pathogen Penicillium marneffei (ATCC18224) and its near taxonomic relative Talaromyces stipitatus (ATCC10500).</title>
        <authorList>
            <person name="Nierman W.C."/>
            <person name="Fedorova-Abrams N.D."/>
            <person name="Andrianopoulos A."/>
        </authorList>
    </citation>
    <scope>NUCLEOTIDE SEQUENCE [LARGE SCALE GENOMIC DNA]</scope>
    <source>
        <strain>ATCC 10500 / CBS 375.48 / QM 6759 / NRRL 1006</strain>
    </source>
</reference>
<feature type="transit peptide" description="Mitochondrion" evidence="1">
    <location>
        <begin position="1"/>
        <end position="114"/>
    </location>
</feature>
<feature type="chain" id="PRO_0000413281" description="Glutamyl-tRNA(Gln) amidotransferase subunit B, mitochondrial">
    <location>
        <begin position="115"/>
        <end position="595"/>
    </location>
</feature>
<feature type="region of interest" description="Disordered" evidence="2">
    <location>
        <begin position="59"/>
        <end position="78"/>
    </location>
</feature>
<gene>
    <name type="ORF">TSTA_027330</name>
</gene>
<evidence type="ECO:0000255" key="1">
    <source>
        <dbReference type="HAMAP-Rule" id="MF_03147"/>
    </source>
</evidence>
<evidence type="ECO:0000256" key="2">
    <source>
        <dbReference type="SAM" id="MobiDB-lite"/>
    </source>
</evidence>
<dbReference type="EC" id="6.3.5.-" evidence="1"/>
<dbReference type="EMBL" id="EQ962654">
    <property type="protein sequence ID" value="EED19436.1"/>
    <property type="molecule type" value="Genomic_DNA"/>
</dbReference>
<dbReference type="RefSeq" id="XP_002479870.1">
    <property type="nucleotide sequence ID" value="XM_002479825.1"/>
</dbReference>
<dbReference type="SMR" id="B8M501"/>
<dbReference type="FunCoup" id="B8M501">
    <property type="interactions" value="363"/>
</dbReference>
<dbReference type="STRING" id="441959.B8M501"/>
<dbReference type="GeneID" id="8109652"/>
<dbReference type="VEuPathDB" id="FungiDB:TSTA_027330"/>
<dbReference type="eggNOG" id="KOG2438">
    <property type="taxonomic scope" value="Eukaryota"/>
</dbReference>
<dbReference type="HOGENOM" id="CLU_019240_4_1_1"/>
<dbReference type="InParanoid" id="B8M501"/>
<dbReference type="OMA" id="ARKWWMG"/>
<dbReference type="OrthoDB" id="1722066at2759"/>
<dbReference type="PhylomeDB" id="B8M501"/>
<dbReference type="Proteomes" id="UP000001745">
    <property type="component" value="Unassembled WGS sequence"/>
</dbReference>
<dbReference type="GO" id="GO:0030956">
    <property type="term" value="C:glutamyl-tRNA(Gln) amidotransferase complex"/>
    <property type="evidence" value="ECO:0007669"/>
    <property type="project" value="UniProtKB-UniRule"/>
</dbReference>
<dbReference type="GO" id="GO:0005739">
    <property type="term" value="C:mitochondrion"/>
    <property type="evidence" value="ECO:0007669"/>
    <property type="project" value="UniProtKB-SubCell"/>
</dbReference>
<dbReference type="GO" id="GO:0005524">
    <property type="term" value="F:ATP binding"/>
    <property type="evidence" value="ECO:0007669"/>
    <property type="project" value="UniProtKB-KW"/>
</dbReference>
<dbReference type="GO" id="GO:0050567">
    <property type="term" value="F:glutaminyl-tRNA synthase (glutamine-hydrolyzing) activity"/>
    <property type="evidence" value="ECO:0007669"/>
    <property type="project" value="UniProtKB-UniRule"/>
</dbReference>
<dbReference type="GO" id="GO:0070681">
    <property type="term" value="P:glutaminyl-tRNAGln biosynthesis via transamidation"/>
    <property type="evidence" value="ECO:0007669"/>
    <property type="project" value="UniProtKB-UniRule"/>
</dbReference>
<dbReference type="GO" id="GO:0032543">
    <property type="term" value="P:mitochondrial translation"/>
    <property type="evidence" value="ECO:0007669"/>
    <property type="project" value="UniProtKB-UniRule"/>
</dbReference>
<dbReference type="Gene3D" id="1.10.10.410">
    <property type="match status" value="1"/>
</dbReference>
<dbReference type="HAMAP" id="MF_00121">
    <property type="entry name" value="GatB"/>
    <property type="match status" value="1"/>
</dbReference>
<dbReference type="InterPro" id="IPR017959">
    <property type="entry name" value="Asn/Gln-tRNA_amidoTrfase_suB/E"/>
</dbReference>
<dbReference type="InterPro" id="IPR006075">
    <property type="entry name" value="Asn/Gln-tRNA_Trfase_suB/E_cat"/>
</dbReference>
<dbReference type="InterPro" id="IPR018027">
    <property type="entry name" value="Asn/Gln_amidotransferase"/>
</dbReference>
<dbReference type="InterPro" id="IPR003789">
    <property type="entry name" value="Asn/Gln_tRNA_amidoTrase-B-like"/>
</dbReference>
<dbReference type="InterPro" id="IPR004413">
    <property type="entry name" value="GatB"/>
</dbReference>
<dbReference type="InterPro" id="IPR023168">
    <property type="entry name" value="GatB_Yqey_C_2"/>
</dbReference>
<dbReference type="InterPro" id="IPR017958">
    <property type="entry name" value="Gln-tRNA_amidoTrfase_suB_CS"/>
</dbReference>
<dbReference type="InterPro" id="IPR014746">
    <property type="entry name" value="Gln_synth/guanido_kin_cat_dom"/>
</dbReference>
<dbReference type="NCBIfam" id="TIGR00133">
    <property type="entry name" value="gatB"/>
    <property type="match status" value="1"/>
</dbReference>
<dbReference type="NCBIfam" id="NF004012">
    <property type="entry name" value="PRK05477.1-2"/>
    <property type="match status" value="1"/>
</dbReference>
<dbReference type="PANTHER" id="PTHR11659">
    <property type="entry name" value="GLUTAMYL-TRNA GLN AMIDOTRANSFERASE SUBUNIT B MITOCHONDRIAL AND PROKARYOTIC PET112-RELATED"/>
    <property type="match status" value="1"/>
</dbReference>
<dbReference type="PANTHER" id="PTHR11659:SF0">
    <property type="entry name" value="GLUTAMYL-TRNA(GLN) AMIDOTRANSFERASE SUBUNIT B, MITOCHONDRIAL"/>
    <property type="match status" value="1"/>
</dbReference>
<dbReference type="Pfam" id="PF02934">
    <property type="entry name" value="GatB_N"/>
    <property type="match status" value="1"/>
</dbReference>
<dbReference type="Pfam" id="PF02637">
    <property type="entry name" value="GatB_Yqey"/>
    <property type="match status" value="1"/>
</dbReference>
<dbReference type="SMART" id="SM00845">
    <property type="entry name" value="GatB_Yqey"/>
    <property type="match status" value="1"/>
</dbReference>
<dbReference type="SUPFAM" id="SSF89095">
    <property type="entry name" value="GatB/YqeY motif"/>
    <property type="match status" value="1"/>
</dbReference>
<dbReference type="SUPFAM" id="SSF55931">
    <property type="entry name" value="Glutamine synthetase/guanido kinase"/>
    <property type="match status" value="1"/>
</dbReference>
<dbReference type="PROSITE" id="PS01234">
    <property type="entry name" value="GATB"/>
    <property type="match status" value="1"/>
</dbReference>
<keyword id="KW-0067">ATP-binding</keyword>
<keyword id="KW-0436">Ligase</keyword>
<keyword id="KW-0496">Mitochondrion</keyword>
<keyword id="KW-0547">Nucleotide-binding</keyword>
<keyword id="KW-0648">Protein biosynthesis</keyword>
<keyword id="KW-1185">Reference proteome</keyword>
<keyword id="KW-0809">Transit peptide</keyword>
<organism>
    <name type="scientific">Talaromyces stipitatus (strain ATCC 10500 / CBS 375.48 / QM 6759 / NRRL 1006)</name>
    <name type="common">Penicillium stipitatum</name>
    <dbReference type="NCBI Taxonomy" id="441959"/>
    <lineage>
        <taxon>Eukaryota</taxon>
        <taxon>Fungi</taxon>
        <taxon>Dikarya</taxon>
        <taxon>Ascomycota</taxon>
        <taxon>Pezizomycotina</taxon>
        <taxon>Eurotiomycetes</taxon>
        <taxon>Eurotiomycetidae</taxon>
        <taxon>Eurotiales</taxon>
        <taxon>Trichocomaceae</taxon>
        <taxon>Talaromyces</taxon>
        <taxon>Talaromyces sect. Talaromyces</taxon>
    </lineage>
</organism>
<protein>
    <recommendedName>
        <fullName evidence="1">Glutamyl-tRNA(Gln) amidotransferase subunit B, mitochondrial</fullName>
        <shortName evidence="1">Glu-AdT subunit B</shortName>
        <ecNumber evidence="1">6.3.5.-</ecNumber>
    </recommendedName>
</protein>
<name>GATB_TALSN</name>